<feature type="initiator methionine" description="Removed" evidence="2">
    <location>
        <position position="1"/>
    </location>
</feature>
<feature type="chain" id="PRO_0000316088" description="Vesicle-associated membrane protein 7">
    <location>
        <begin position="2"/>
        <end position="220"/>
    </location>
</feature>
<feature type="topological domain" description="Cytoplasmic" evidence="4">
    <location>
        <begin position="2"/>
        <end position="188"/>
    </location>
</feature>
<feature type="transmembrane region" description="Helical; Anchor for type IV membrane protein" evidence="4">
    <location>
        <begin position="189"/>
        <end position="209"/>
    </location>
</feature>
<feature type="topological domain" description="Vesicular" evidence="4">
    <location>
        <begin position="210"/>
        <end position="220"/>
    </location>
</feature>
<feature type="domain" description="Longin" evidence="5">
    <location>
        <begin position="7"/>
        <end position="110"/>
    </location>
</feature>
<feature type="domain" description="v-SNARE coiled-coil homology" evidence="6">
    <location>
        <begin position="125"/>
        <end position="185"/>
    </location>
</feature>
<feature type="modified residue" description="N-acetylalanine" evidence="2">
    <location>
        <position position="2"/>
    </location>
</feature>
<feature type="modified residue" description="Phosphoserine" evidence="2">
    <location>
        <position position="167"/>
    </location>
</feature>
<feature type="modified residue" description="Phosphoserine" evidence="3">
    <location>
        <position position="168"/>
    </location>
</feature>
<dbReference type="EMBL" id="AF281632">
    <property type="protein sequence ID" value="AAF88059.1"/>
    <property type="molecule type" value="mRNA"/>
</dbReference>
<dbReference type="PIR" id="JC7258">
    <property type="entry name" value="JC7258"/>
</dbReference>
<dbReference type="RefSeq" id="NP_445983.1">
    <property type="nucleotide sequence ID" value="NM_053531.3"/>
</dbReference>
<dbReference type="RefSeq" id="XP_006249078.1">
    <property type="nucleotide sequence ID" value="XM_006249016.3"/>
</dbReference>
<dbReference type="EMDB" id="EMD-6210"/>
<dbReference type="SMR" id="Q9JHW5"/>
<dbReference type="BioGRID" id="250111">
    <property type="interactions" value="1"/>
</dbReference>
<dbReference type="CORUM" id="Q9JHW5"/>
<dbReference type="DIP" id="DIP-37175N"/>
<dbReference type="FunCoup" id="Q9JHW5">
    <property type="interactions" value="1729"/>
</dbReference>
<dbReference type="IntAct" id="Q9JHW5">
    <property type="interactions" value="8"/>
</dbReference>
<dbReference type="MINT" id="Q9JHW5"/>
<dbReference type="STRING" id="10116.ENSRNOP00000011065"/>
<dbReference type="PhosphoSitePlus" id="Q9JHW5"/>
<dbReference type="SwissPalm" id="Q9JHW5"/>
<dbReference type="jPOST" id="Q9JHW5"/>
<dbReference type="PaxDb" id="10116-ENSRNOP00000011065"/>
<dbReference type="Ensembl" id="ENSRNOT00000011065.5">
    <property type="protein sequence ID" value="ENSRNOP00000011065.2"/>
    <property type="gene ID" value="ENSRNOG00000008372.5"/>
</dbReference>
<dbReference type="GeneID" id="85491"/>
<dbReference type="KEGG" id="rno:85491"/>
<dbReference type="UCSC" id="RGD:621558">
    <property type="organism name" value="rat"/>
</dbReference>
<dbReference type="AGR" id="RGD:621558"/>
<dbReference type="CTD" id="6845"/>
<dbReference type="RGD" id="621558">
    <property type="gene designation" value="Vamp7"/>
</dbReference>
<dbReference type="eggNOG" id="KOG0859">
    <property type="taxonomic scope" value="Eukaryota"/>
</dbReference>
<dbReference type="GeneTree" id="ENSGT00510000047733"/>
<dbReference type="HOGENOM" id="CLU_064620_1_1_1"/>
<dbReference type="InParanoid" id="Q9JHW5"/>
<dbReference type="OMA" id="NTKLMIM"/>
<dbReference type="OrthoDB" id="248747at2759"/>
<dbReference type="PhylomeDB" id="Q9JHW5"/>
<dbReference type="TreeFam" id="TF323448"/>
<dbReference type="Reactome" id="R-RNO-199992">
    <property type="pathway name" value="trans-Golgi Network Vesicle Budding"/>
</dbReference>
<dbReference type="Reactome" id="R-RNO-432720">
    <property type="pathway name" value="Lysosome Vesicle Biogenesis"/>
</dbReference>
<dbReference type="Reactome" id="R-RNO-432722">
    <property type="pathway name" value="Golgi Associated Vesicle Biogenesis"/>
</dbReference>
<dbReference type="Reactome" id="R-RNO-8856825">
    <property type="pathway name" value="Cargo recognition for clathrin-mediated endocytosis"/>
</dbReference>
<dbReference type="Reactome" id="R-RNO-8856828">
    <property type="pathway name" value="Clathrin-mediated endocytosis"/>
</dbReference>
<dbReference type="Reactome" id="R-RNO-9020591">
    <property type="pathway name" value="Interleukin-12 signaling"/>
</dbReference>
<dbReference type="PRO" id="PR:Q9JHW5"/>
<dbReference type="Proteomes" id="UP000002494">
    <property type="component" value="Chromosome 12"/>
</dbReference>
<dbReference type="Bgee" id="ENSRNOG00000008372">
    <property type="expression patterns" value="Expressed in liver and 19 other cell types or tissues"/>
</dbReference>
<dbReference type="GO" id="GO:0045177">
    <property type="term" value="C:apical part of cell"/>
    <property type="evidence" value="ECO:0000266"/>
    <property type="project" value="RGD"/>
</dbReference>
<dbReference type="GO" id="GO:0035577">
    <property type="term" value="C:azurophil granule membrane"/>
    <property type="evidence" value="ECO:0000266"/>
    <property type="project" value="RGD"/>
</dbReference>
<dbReference type="GO" id="GO:0009986">
    <property type="term" value="C:cell surface"/>
    <property type="evidence" value="ECO:0000266"/>
    <property type="project" value="RGD"/>
</dbReference>
<dbReference type="GO" id="GO:0005737">
    <property type="term" value="C:cytoplasm"/>
    <property type="evidence" value="ECO:0000266"/>
    <property type="project" value="RGD"/>
</dbReference>
<dbReference type="GO" id="GO:0005789">
    <property type="term" value="C:endoplasmic reticulum membrane"/>
    <property type="evidence" value="ECO:0000314"/>
    <property type="project" value="UniProtKB"/>
</dbReference>
<dbReference type="GO" id="GO:0030175">
    <property type="term" value="C:filopodium"/>
    <property type="evidence" value="ECO:0000314"/>
    <property type="project" value="RGD"/>
</dbReference>
<dbReference type="GO" id="GO:0005794">
    <property type="term" value="C:Golgi apparatus"/>
    <property type="evidence" value="ECO:0000266"/>
    <property type="project" value="RGD"/>
</dbReference>
<dbReference type="GO" id="GO:0098686">
    <property type="term" value="C:hippocampal mossy fiber to CA3 synapse"/>
    <property type="evidence" value="ECO:0000314"/>
    <property type="project" value="SynGO"/>
</dbReference>
<dbReference type="GO" id="GO:0030027">
    <property type="term" value="C:lamellipodium"/>
    <property type="evidence" value="ECO:0000266"/>
    <property type="project" value="RGD"/>
</dbReference>
<dbReference type="GO" id="GO:0031902">
    <property type="term" value="C:late endosome membrane"/>
    <property type="evidence" value="ECO:0000314"/>
    <property type="project" value="UniProtKB"/>
</dbReference>
<dbReference type="GO" id="GO:0005765">
    <property type="term" value="C:lysosomal membrane"/>
    <property type="evidence" value="ECO:0000314"/>
    <property type="project" value="UniProtKB"/>
</dbReference>
<dbReference type="GO" id="GO:0016020">
    <property type="term" value="C:membrane"/>
    <property type="evidence" value="ECO:0000266"/>
    <property type="project" value="RGD"/>
</dbReference>
<dbReference type="GO" id="GO:0043005">
    <property type="term" value="C:neuron projection"/>
    <property type="evidence" value="ECO:0000314"/>
    <property type="project" value="UniProtKB"/>
</dbReference>
<dbReference type="GO" id="GO:0048471">
    <property type="term" value="C:perinuclear region of cytoplasm"/>
    <property type="evidence" value="ECO:0000314"/>
    <property type="project" value="RGD"/>
</dbReference>
<dbReference type="GO" id="GO:0045335">
    <property type="term" value="C:phagocytic vesicle"/>
    <property type="evidence" value="ECO:0000250"/>
    <property type="project" value="UniProtKB"/>
</dbReference>
<dbReference type="GO" id="GO:0030670">
    <property type="term" value="C:phagocytic vesicle membrane"/>
    <property type="evidence" value="ECO:0007669"/>
    <property type="project" value="UniProtKB-SubCell"/>
</dbReference>
<dbReference type="GO" id="GO:0005886">
    <property type="term" value="C:plasma membrane"/>
    <property type="evidence" value="ECO:0000266"/>
    <property type="project" value="RGD"/>
</dbReference>
<dbReference type="GO" id="GO:0031091">
    <property type="term" value="C:platelet alpha granule"/>
    <property type="evidence" value="ECO:0000266"/>
    <property type="project" value="RGD"/>
</dbReference>
<dbReference type="GO" id="GO:0031143">
    <property type="term" value="C:pseudopodium"/>
    <property type="evidence" value="ECO:0000266"/>
    <property type="project" value="RGD"/>
</dbReference>
<dbReference type="GO" id="GO:0030141">
    <property type="term" value="C:secretory granule"/>
    <property type="evidence" value="ECO:0000266"/>
    <property type="project" value="RGD"/>
</dbReference>
<dbReference type="GO" id="GO:0030667">
    <property type="term" value="C:secretory granule membrane"/>
    <property type="evidence" value="ECO:0000266"/>
    <property type="project" value="RGD"/>
</dbReference>
<dbReference type="GO" id="GO:0031201">
    <property type="term" value="C:SNARE complex"/>
    <property type="evidence" value="ECO:0000314"/>
    <property type="project" value="UniProtKB"/>
</dbReference>
<dbReference type="GO" id="GO:0030672">
    <property type="term" value="C:synaptic vesicle membrane"/>
    <property type="evidence" value="ECO:0000314"/>
    <property type="project" value="SynGO"/>
</dbReference>
<dbReference type="GO" id="GO:0005802">
    <property type="term" value="C:trans-Golgi network"/>
    <property type="evidence" value="ECO:0000266"/>
    <property type="project" value="RGD"/>
</dbReference>
<dbReference type="GO" id="GO:0030133">
    <property type="term" value="C:transport vesicle"/>
    <property type="evidence" value="ECO:0000266"/>
    <property type="project" value="RGD"/>
</dbReference>
<dbReference type="GO" id="GO:0005484">
    <property type="term" value="F:SNAP receptor activity"/>
    <property type="evidence" value="ECO:0000314"/>
    <property type="project" value="FlyBase"/>
</dbReference>
<dbReference type="GO" id="GO:0000149">
    <property type="term" value="F:SNARE binding"/>
    <property type="evidence" value="ECO:0000318"/>
    <property type="project" value="GO_Central"/>
</dbReference>
<dbReference type="GO" id="GO:0019905">
    <property type="term" value="F:syntaxin binding"/>
    <property type="evidence" value="ECO:0000353"/>
    <property type="project" value="RGD"/>
</dbReference>
<dbReference type="GO" id="GO:0017156">
    <property type="term" value="P:calcium-ion regulated exocytosis"/>
    <property type="evidence" value="ECO:0000314"/>
    <property type="project" value="UniProtKB"/>
</dbReference>
<dbReference type="GO" id="GO:0006888">
    <property type="term" value="P:endoplasmic reticulum to Golgi vesicle-mediated transport"/>
    <property type="evidence" value="ECO:0000314"/>
    <property type="project" value="UniProtKB"/>
</dbReference>
<dbReference type="GO" id="GO:0008333">
    <property type="term" value="P:endosome to lysosome transport"/>
    <property type="evidence" value="ECO:0000314"/>
    <property type="project" value="UniProtKB"/>
</dbReference>
<dbReference type="GO" id="GO:0043308">
    <property type="term" value="P:eosinophil degranulation"/>
    <property type="evidence" value="ECO:0000314"/>
    <property type="project" value="UniProtKB"/>
</dbReference>
<dbReference type="GO" id="GO:0006887">
    <property type="term" value="P:exocytosis"/>
    <property type="evidence" value="ECO:0000314"/>
    <property type="project" value="UniProtKB"/>
</dbReference>
<dbReference type="GO" id="GO:0043001">
    <property type="term" value="P:Golgi to plasma membrane protein transport"/>
    <property type="evidence" value="ECO:0000266"/>
    <property type="project" value="RGD"/>
</dbReference>
<dbReference type="GO" id="GO:0043320">
    <property type="term" value="P:natural killer cell degranulation"/>
    <property type="evidence" value="ECO:0000266"/>
    <property type="project" value="RGD"/>
</dbReference>
<dbReference type="GO" id="GO:0043312">
    <property type="term" value="P:neutrophil degranulation"/>
    <property type="evidence" value="ECO:0000314"/>
    <property type="project" value="UniProtKB"/>
</dbReference>
<dbReference type="GO" id="GO:0006911">
    <property type="term" value="P:phagocytosis, engulfment"/>
    <property type="evidence" value="ECO:0000314"/>
    <property type="project" value="UniProtKB"/>
</dbReference>
<dbReference type="GO" id="GO:0050775">
    <property type="term" value="P:positive regulation of dendrite morphogenesis"/>
    <property type="evidence" value="ECO:0000266"/>
    <property type="project" value="RGD"/>
</dbReference>
<dbReference type="GO" id="GO:1903595">
    <property type="term" value="P:positive regulation of histamine secretion by mast cell"/>
    <property type="evidence" value="ECO:0000266"/>
    <property type="project" value="RGD"/>
</dbReference>
<dbReference type="GO" id="GO:1900483">
    <property type="term" value="P:regulation of protein targeting to vacuolar membrane"/>
    <property type="evidence" value="ECO:0000266"/>
    <property type="project" value="RGD"/>
</dbReference>
<dbReference type="GO" id="GO:0035493">
    <property type="term" value="P:SNARE complex assembly"/>
    <property type="evidence" value="ECO:0000266"/>
    <property type="project" value="RGD"/>
</dbReference>
<dbReference type="GO" id="GO:0016079">
    <property type="term" value="P:synaptic vesicle exocytosis"/>
    <property type="evidence" value="ECO:0000314"/>
    <property type="project" value="SynGO"/>
</dbReference>
<dbReference type="GO" id="GO:0034197">
    <property type="term" value="P:triglyceride transport"/>
    <property type="evidence" value="ECO:0000315"/>
    <property type="project" value="RGD"/>
</dbReference>
<dbReference type="GO" id="GO:0006906">
    <property type="term" value="P:vesicle fusion"/>
    <property type="evidence" value="ECO:0000314"/>
    <property type="project" value="UniProtKB"/>
</dbReference>
<dbReference type="GO" id="GO:0048280">
    <property type="term" value="P:vesicle fusion with Golgi apparatus"/>
    <property type="evidence" value="ECO:0000314"/>
    <property type="project" value="RGD"/>
</dbReference>
<dbReference type="GO" id="GO:0047496">
    <property type="term" value="P:vesicle transport along microtubule"/>
    <property type="evidence" value="ECO:0000314"/>
    <property type="project" value="UniProtKB"/>
</dbReference>
<dbReference type="GO" id="GO:0016192">
    <property type="term" value="P:vesicle-mediated transport"/>
    <property type="evidence" value="ECO:0000314"/>
    <property type="project" value="UniProtKB"/>
</dbReference>
<dbReference type="CDD" id="cd14824">
    <property type="entry name" value="Longin"/>
    <property type="match status" value="1"/>
</dbReference>
<dbReference type="CDD" id="cd15871">
    <property type="entry name" value="R-SNARE_VAMP7"/>
    <property type="match status" value="1"/>
</dbReference>
<dbReference type="FunFam" id="1.20.5.110:FF:000004">
    <property type="entry name" value="Vesicle-associated membrane protein 7"/>
    <property type="match status" value="1"/>
</dbReference>
<dbReference type="FunFam" id="3.30.450.50:FF:000006">
    <property type="entry name" value="Vesicle-associated membrane protein 7"/>
    <property type="match status" value="1"/>
</dbReference>
<dbReference type="Gene3D" id="1.20.5.110">
    <property type="match status" value="1"/>
</dbReference>
<dbReference type="Gene3D" id="3.30.450.50">
    <property type="entry name" value="Longin domain"/>
    <property type="match status" value="1"/>
</dbReference>
<dbReference type="InterPro" id="IPR011012">
    <property type="entry name" value="Longin-like_dom_sf"/>
</dbReference>
<dbReference type="InterPro" id="IPR010908">
    <property type="entry name" value="Longin_dom"/>
</dbReference>
<dbReference type="InterPro" id="IPR001388">
    <property type="entry name" value="Synaptobrevin-like"/>
</dbReference>
<dbReference type="InterPro" id="IPR051097">
    <property type="entry name" value="Synaptobrevin-like_transport"/>
</dbReference>
<dbReference type="InterPro" id="IPR042855">
    <property type="entry name" value="V_SNARE_CC"/>
</dbReference>
<dbReference type="PANTHER" id="PTHR21136">
    <property type="entry name" value="SNARE PROTEINS"/>
    <property type="match status" value="1"/>
</dbReference>
<dbReference type="PANTHER" id="PTHR21136:SF196">
    <property type="entry name" value="VESICLE-ASSOCIATED MEMBRANE PROTEIN 7"/>
    <property type="match status" value="1"/>
</dbReference>
<dbReference type="Pfam" id="PF13774">
    <property type="entry name" value="Longin"/>
    <property type="match status" value="1"/>
</dbReference>
<dbReference type="Pfam" id="PF00957">
    <property type="entry name" value="Synaptobrevin"/>
    <property type="match status" value="1"/>
</dbReference>
<dbReference type="PRINTS" id="PR00219">
    <property type="entry name" value="SYNAPTOBREVN"/>
</dbReference>
<dbReference type="SMART" id="SM01270">
    <property type="entry name" value="Longin"/>
    <property type="match status" value="1"/>
</dbReference>
<dbReference type="SUPFAM" id="SSF58038">
    <property type="entry name" value="SNARE fusion complex"/>
    <property type="match status" value="1"/>
</dbReference>
<dbReference type="SUPFAM" id="SSF64356">
    <property type="entry name" value="SNARE-like"/>
    <property type="match status" value="1"/>
</dbReference>
<dbReference type="PROSITE" id="PS50859">
    <property type="entry name" value="LONGIN"/>
    <property type="match status" value="1"/>
</dbReference>
<dbReference type="PROSITE" id="PS00417">
    <property type="entry name" value="SYNAPTOBREVIN"/>
    <property type="match status" value="1"/>
</dbReference>
<dbReference type="PROSITE" id="PS50892">
    <property type="entry name" value="V_SNARE"/>
    <property type="match status" value="1"/>
</dbReference>
<keyword id="KW-0007">Acetylation</keyword>
<keyword id="KW-0175">Coiled coil</keyword>
<keyword id="KW-0968">Cytoplasmic vesicle</keyword>
<keyword id="KW-0256">Endoplasmic reticulum</keyword>
<keyword id="KW-0967">Endosome</keyword>
<keyword id="KW-0268">Exocytosis</keyword>
<keyword id="KW-0333">Golgi apparatus</keyword>
<keyword id="KW-0458">Lysosome</keyword>
<keyword id="KW-0472">Membrane</keyword>
<keyword id="KW-0597">Phosphoprotein</keyword>
<keyword id="KW-0653">Protein transport</keyword>
<keyword id="KW-1185">Reference proteome</keyword>
<keyword id="KW-0735">Signal-anchor</keyword>
<keyword id="KW-0770">Synapse</keyword>
<keyword id="KW-0771">Synaptosome</keyword>
<keyword id="KW-0812">Transmembrane</keyword>
<keyword id="KW-1133">Transmembrane helix</keyword>
<keyword id="KW-0813">Transport</keyword>
<name>VAMP7_RAT</name>
<evidence type="ECO:0000250" key="1"/>
<evidence type="ECO:0000250" key="2">
    <source>
        <dbReference type="UniProtKB" id="P51809"/>
    </source>
</evidence>
<evidence type="ECO:0000250" key="3">
    <source>
        <dbReference type="UniProtKB" id="P70280"/>
    </source>
</evidence>
<evidence type="ECO:0000255" key="4"/>
<evidence type="ECO:0000255" key="5">
    <source>
        <dbReference type="PROSITE-ProRule" id="PRU00231"/>
    </source>
</evidence>
<evidence type="ECO:0000255" key="6">
    <source>
        <dbReference type="PROSITE-ProRule" id="PRU00290"/>
    </source>
</evidence>
<evidence type="ECO:0000269" key="7">
    <source>
    </source>
</evidence>
<evidence type="ECO:0000269" key="8">
    <source>
    </source>
</evidence>
<evidence type="ECO:0000269" key="9">
    <source>
    </source>
</evidence>
<evidence type="ECO:0000269" key="10">
    <source>
    </source>
</evidence>
<evidence type="ECO:0000269" key="11">
    <source>
    </source>
</evidence>
<evidence type="ECO:0000269" key="12">
    <source>
    </source>
</evidence>
<evidence type="ECO:0000305" key="13"/>
<proteinExistence type="evidence at protein level"/>
<organism>
    <name type="scientific">Rattus norvegicus</name>
    <name type="common">Rat</name>
    <dbReference type="NCBI Taxonomy" id="10116"/>
    <lineage>
        <taxon>Eukaryota</taxon>
        <taxon>Metazoa</taxon>
        <taxon>Chordata</taxon>
        <taxon>Craniata</taxon>
        <taxon>Vertebrata</taxon>
        <taxon>Euteleostomi</taxon>
        <taxon>Mammalia</taxon>
        <taxon>Eutheria</taxon>
        <taxon>Euarchontoglires</taxon>
        <taxon>Glires</taxon>
        <taxon>Rodentia</taxon>
        <taxon>Myomorpha</taxon>
        <taxon>Muroidea</taxon>
        <taxon>Muridae</taxon>
        <taxon>Murinae</taxon>
        <taxon>Rattus</taxon>
    </lineage>
</organism>
<protein>
    <recommendedName>
        <fullName>Vesicle-associated membrane protein 7</fullName>
        <shortName>VAMP-7</shortName>
    </recommendedName>
    <alternativeName>
        <fullName>Synaptobrevin-like protein 1</fullName>
    </alternativeName>
</protein>
<gene>
    <name type="primary">Vamp7</name>
    <name type="synonym">Sybl1</name>
</gene>
<reference key="1">
    <citation type="journal article" date="2000" name="Biochem. Biophys. Res. Commun.">
        <title>Rat basophilic leukemia cells express syntaxin-3 and VAMP-7 in granule membranes.</title>
        <authorList>
            <person name="Hibi T."/>
            <person name="Hirashima N."/>
            <person name="Nakanishi M."/>
        </authorList>
    </citation>
    <scope>NUCLEOTIDE SEQUENCE [MRNA]</scope>
</reference>
<reference key="2">
    <citation type="journal article" date="1998" name="J. Biol. Chem.">
        <title>Seven novel mammalian SNARE proteins localize to distinct membrane compartments.</title>
        <authorList>
            <person name="Advani R.J."/>
            <person name="Bae H.-R."/>
            <person name="Bock J.B."/>
            <person name="Chao D.S."/>
            <person name="Doung Y.-C."/>
            <person name="Prekeris R."/>
            <person name="Yoo J.-S."/>
            <person name="Scheller R.H."/>
        </authorList>
    </citation>
    <scope>SUBCELLULAR LOCATION</scope>
    <scope>TISSUE SPECIFICITY</scope>
</reference>
<reference key="3">
    <citation type="journal article" date="1999" name="J. Cell Biol.">
        <title>VAMP-7 mediates vesicular transport from endosomes to lysosomes.</title>
        <authorList>
            <person name="Advani R.J."/>
            <person name="Yang B."/>
            <person name="Prekeris R."/>
            <person name="Lee K.C."/>
            <person name="Klumperman J."/>
            <person name="Scheller R.H."/>
        </authorList>
    </citation>
    <scope>FUNCTION</scope>
    <scope>SUBCELLULAR LOCATION</scope>
    <scope>TISSUE SPECIFICITY</scope>
</reference>
<reference key="4">
    <citation type="journal article" date="1999" name="J. Neurosci.">
        <title>Subcellular localization of tetanus neurotoxin-insensitive vesicle-associated membrane protein (VAMP)/VAMP7 in neuronal cells: evidence for a novel membrane compartment.</title>
        <authorList>
            <person name="Coco S."/>
            <person name="Raposo G."/>
            <person name="Martinez S."/>
            <person name="Fontaine J.-J."/>
            <person name="Takamori S."/>
            <person name="Zahraoui A."/>
            <person name="Jahn R."/>
            <person name="Matteoli M."/>
            <person name="Louvard D."/>
            <person name="Galli T."/>
        </authorList>
    </citation>
    <scope>SUBCELLULAR LOCATION</scope>
    <scope>TISSUE SPECIFICITY</scope>
</reference>
<reference key="5">
    <citation type="journal article" date="2004" name="EMBO Rep.">
        <title>Combinatorial SNARE complexes with VAMP7 or VAMP8 define different late endocytic fusion events.</title>
        <authorList>
            <person name="Pryor P.R."/>
            <person name="Mullock B.M."/>
            <person name="Bright N.A."/>
            <person name="Lindsay M.R."/>
            <person name="Gray S.R."/>
            <person name="Richardson S.C.W."/>
            <person name="Stewart A."/>
            <person name="James D.E."/>
            <person name="Piper R.C."/>
            <person name="Luzio J.P."/>
        </authorList>
    </citation>
    <scope>FUNCTION</scope>
    <scope>SNARE COMPLEX CHARACTERIZATION</scope>
</reference>
<reference key="6">
    <citation type="journal article" date="2004" name="J. Biol. Chem.">
        <title>Identification of SNAREs involved in synaptotagmin VII-regulated lysosomal exocytosis.</title>
        <authorList>
            <person name="Rao S.K."/>
            <person name="Huynh C."/>
            <person name="Proux-Gillardeaux V."/>
            <person name="Galli T."/>
            <person name="Andrews N.W."/>
        </authorList>
    </citation>
    <scope>FUNCTION</scope>
    <scope>SNARE COMPLEX CHARACTERIZATION</scope>
</reference>
<reference key="7">
    <citation type="journal article" date="2006" name="J. Cell Sci.">
        <title>Vesicle-associated membrane protein 7 is expressed in intestinal ER.</title>
        <authorList>
            <person name="Siddiqi S.A."/>
            <person name="Mahan J."/>
            <person name="Siddiqi S."/>
            <person name="Gorelick F.S."/>
            <person name="Mansbach C.M. II"/>
        </authorList>
    </citation>
    <scope>FUNCTION</scope>
    <scope>SUBCELLULAR LOCATION</scope>
    <scope>TISSUE SPECIFICITY</scope>
</reference>
<sequence length="220" mass="24776">MAILFAVVARGTTILAKHAWCGGNFLEVTEQILAKIPSENNKLTYSHGNYLFHYICQDRIVYLCITDDDFERSRAFGFLNEVKKRFQTTYGSRAQTALPYAMNSEFSSVLAAQLKHHSENQSLDRVTETQAQVDELKGIMVRNIDLVAQRGERLELLIDKTENLVDSSVTFKTTSRNLARAMCVKNVKLTAIIVVVSIVFIYIIVSPLCGGFTWPSCVKK</sequence>
<accession>Q9JHW5</accession>
<comment type="function">
    <text evidence="7 9 10 11">Involved in the targeting and/or fusion of transport vesicles to their target membrane during transport of proteins from the early endosome to the lysosome. Required for heterotypic fusion of late endosomes with lysosomes and homotypic lysosomal fusion. Required for calcium regulated lysosomal exocytosis. Involved in the export of chylomicrons from the endoplasmic reticulum to the cis Golgi. Required for exocytosis of mediators during eosinophil and neutrophil degranulation, and target cell killing by natural killer cells. Required for focal exocytosis of late endocytic vesicles during phagosome formation.</text>
</comment>
<comment type="subunit">
    <text evidence="1 2">May interact with STX17 (By similarity). Component of the SNARE complex composed of STX4, SNAP23 and VAMP7 that binds SYT7 during lysosomal exocytosis. Component of the SNARE complex composed of STX7, STX8, VAMP7 and VTI1B that is required for heterotypic fusion of late endosomes with lysosomes. Interacts with PICALM (By similarity). Interacts with RAB21 (By similarity).</text>
</comment>
<comment type="interaction">
    <interactant intactId="EBI-919936">
        <id>Q9JHW5</id>
    </interactant>
    <interactant intactId="EBI-6125599">
        <id>Q96NW4</id>
        <label>ANKRD27</label>
    </interactant>
    <organismsDiffer>true</organismsDiffer>
    <experiments>4</experiments>
</comment>
<comment type="subcellular location">
    <subcellularLocation>
        <location>Cytoplasmic vesicle</location>
        <location>Secretory vesicle membrane</location>
        <topology>Single-pass type IV membrane protein</topology>
    </subcellularLocation>
    <subcellularLocation>
        <location>Golgi apparatus</location>
        <location>trans-Golgi network membrane</location>
        <topology>Single-pass type IV membrane protein</topology>
    </subcellularLocation>
    <subcellularLocation>
        <location>Late endosome membrane</location>
        <topology>Single-pass type IV membrane protein</topology>
    </subcellularLocation>
    <subcellularLocation>
        <location>Lysosome membrane</location>
        <topology>Single-pass type IV membrane protein</topology>
    </subcellularLocation>
    <subcellularLocation>
        <location>Endoplasmic reticulum membrane</location>
        <topology>Single-pass type IV membrane protein</topology>
    </subcellularLocation>
    <subcellularLocation>
        <location evidence="1">Cytoplasmic vesicle</location>
        <location evidence="1">Phagosome membrane</location>
        <topology evidence="1">Single-pass type IV membrane protein</topology>
    </subcellularLocation>
    <subcellularLocation>
        <location evidence="1">Synapse</location>
        <location evidence="1">Synaptosome</location>
    </subcellularLocation>
    <text>In immature neurons expression is localized in vesicular structures in axons and dendrites while in mature neurons it is localized to the somatodendritic region. Colocalizes with LAMP1 in kidney cells. Localization to the endoplasmic reticulum membrane was observed in the intestine but not in liver or kidney.</text>
</comment>
<comment type="tissue specificity">
    <text evidence="7 8 11 12">Expressed in brain, kidney, liver, lung, spleen and thymus. Not expressed in heart and skeletal muscle.</text>
</comment>
<comment type="similarity">
    <text evidence="13">Belongs to the synaptobrevin family.</text>
</comment>